<organism>
    <name type="scientific">Arabidopsis thaliana</name>
    <name type="common">Mouse-ear cress</name>
    <dbReference type="NCBI Taxonomy" id="3702"/>
    <lineage>
        <taxon>Eukaryota</taxon>
        <taxon>Viridiplantae</taxon>
        <taxon>Streptophyta</taxon>
        <taxon>Embryophyta</taxon>
        <taxon>Tracheophyta</taxon>
        <taxon>Spermatophyta</taxon>
        <taxon>Magnoliopsida</taxon>
        <taxon>eudicotyledons</taxon>
        <taxon>Gunneridae</taxon>
        <taxon>Pentapetalae</taxon>
        <taxon>rosids</taxon>
        <taxon>malvids</taxon>
        <taxon>Brassicales</taxon>
        <taxon>Brassicaceae</taxon>
        <taxon>Camelineae</taxon>
        <taxon>Arabidopsis</taxon>
    </lineage>
</organism>
<feature type="signal peptide" evidence="1">
    <location>
        <begin position="1"/>
        <end position="22"/>
    </location>
</feature>
<feature type="chain" id="PRO_5009346703" description="Protein CASPARIAN STRIP INTEGRITY FACTOR 1">
    <location>
        <begin position="23"/>
        <end position="83"/>
    </location>
</feature>
<feature type="region of interest" description="Disordered" evidence="2">
    <location>
        <begin position="59"/>
        <end position="83"/>
    </location>
</feature>
<feature type="modified residue" description="Sulfotyrosine" evidence="3">
    <location>
        <position position="64"/>
    </location>
</feature>
<feature type="modified residue" description="Hydroxyproline" evidence="3">
    <location>
        <position position="69"/>
    </location>
</feature>
<feature type="modified residue" description="Hydroxyproline" evidence="3">
    <location>
        <position position="71"/>
    </location>
</feature>
<protein>
    <recommendedName>
        <fullName evidence="4">Protein CASPARIAN STRIP INTEGRITY FACTOR 1</fullName>
    </recommendedName>
</protein>
<name>CIF1_ARATH</name>
<comment type="function">
    <text evidence="3">Peptide hormone required for contiguous Casparian strip diffusion barrier formation in roots via the regulation of CASPs protein expression and distribution in a GSO1-GSO2 signaling pathway. The Casparian strip is required for ion homeostasis (e.g. iron and potassium ions).</text>
</comment>
<comment type="subunit">
    <text evidence="3">Interacts with the specific receptor kinases GSO1 and GSO2.</text>
</comment>
<comment type="tissue specificity">
    <text evidence="3">Expressed exclusively in the root stele.</text>
</comment>
<comment type="developmental stage">
    <text evidence="3">Accumulates in the stele, especially at the phloem pole, of the mature region of the primary roots.</text>
</comment>
<comment type="induction">
    <text evidence="3">Induced by excess iron and further synergistically regulated by lowering the medium pH.</text>
</comment>
<comment type="disruption phenotype">
    <text evidence="3">No detectable phenotype in cif1-1. The double mutant cif1-1 cif2-1 is defective in ion homeostasis in the xylem due to defect in endodermal barrier formation in the roots. Highly sensitive to excess iron. Retarded growth under low-potassium conditions. Repeatedly interrupted, discontinuous Casparian strip due to patch-like localization of the CASPs proteins. Reduced rosette leaf size.</text>
</comment>
<evidence type="ECO:0000255" key="1"/>
<evidence type="ECO:0000256" key="2">
    <source>
        <dbReference type="SAM" id="MobiDB-lite"/>
    </source>
</evidence>
<evidence type="ECO:0000269" key="3">
    <source>
    </source>
</evidence>
<evidence type="ECO:0000303" key="4">
    <source>
    </source>
</evidence>
<evidence type="ECO:0000305" key="5"/>
<evidence type="ECO:0000312" key="6">
    <source>
        <dbReference type="Araport" id="AT2G16385"/>
    </source>
</evidence>
<keyword id="KW-0961">Cell wall biogenesis/degradation</keyword>
<keyword id="KW-0217">Developmental protein</keyword>
<keyword id="KW-0372">Hormone</keyword>
<keyword id="KW-0379">Hydroxylation</keyword>
<keyword id="KW-1185">Reference proteome</keyword>
<keyword id="KW-0732">Signal</keyword>
<keyword id="KW-0765">Sulfation</keyword>
<gene>
    <name evidence="4" type="primary">CIF1</name>
    <name evidence="6" type="ordered locus">At2g16385</name>
    <name evidence="5" type="ORF">F16F14</name>
</gene>
<dbReference type="EMBL" id="AC007047">
    <property type="status" value="NOT_ANNOTATED_CDS"/>
    <property type="molecule type" value="Genomic_DNA"/>
</dbReference>
<dbReference type="EMBL" id="CP002685">
    <property type="protein sequence ID" value="AEC06491.1"/>
    <property type="molecule type" value="Genomic_DNA"/>
</dbReference>
<dbReference type="EMBL" id="BT006387">
    <property type="protein sequence ID" value="AAP21195.1"/>
    <property type="molecule type" value="mRNA"/>
</dbReference>
<dbReference type="EMBL" id="AK221226">
    <property type="protein sequence ID" value="BAD93812.1"/>
    <property type="molecule type" value="mRNA"/>
</dbReference>
<dbReference type="EMBL" id="AK227669">
    <property type="protein sequence ID" value="BAE99656.1"/>
    <property type="molecule type" value="mRNA"/>
</dbReference>
<dbReference type="RefSeq" id="NP_973472.1">
    <property type="nucleotide sequence ID" value="NM_201743.3"/>
</dbReference>
<dbReference type="SMR" id="Q84MD2"/>
<dbReference type="FunCoup" id="Q84MD2">
    <property type="interactions" value="2"/>
</dbReference>
<dbReference type="STRING" id="3702.Q84MD2"/>
<dbReference type="PaxDb" id="3702-AT2G16385.1"/>
<dbReference type="EnsemblPlants" id="AT2G16385.1">
    <property type="protein sequence ID" value="AT2G16385.1"/>
    <property type="gene ID" value="AT2G16385"/>
</dbReference>
<dbReference type="GeneID" id="2745542"/>
<dbReference type="Gramene" id="AT2G16385.1">
    <property type="protein sequence ID" value="AT2G16385.1"/>
    <property type="gene ID" value="AT2G16385"/>
</dbReference>
<dbReference type="KEGG" id="ath:AT2G16385"/>
<dbReference type="Araport" id="AT2G16385"/>
<dbReference type="TAIR" id="AT2G16385">
    <property type="gene designation" value="CIF1"/>
</dbReference>
<dbReference type="HOGENOM" id="CLU_173636_2_0_1"/>
<dbReference type="InParanoid" id="Q84MD2"/>
<dbReference type="OMA" id="RMNTKDY"/>
<dbReference type="OrthoDB" id="1936508at2759"/>
<dbReference type="PhylomeDB" id="Q84MD2"/>
<dbReference type="PRO" id="PR:Q84MD2"/>
<dbReference type="Proteomes" id="UP000006548">
    <property type="component" value="Chromosome 2"/>
</dbReference>
<dbReference type="ExpressionAtlas" id="Q84MD2">
    <property type="expression patterns" value="baseline and differential"/>
</dbReference>
<dbReference type="GO" id="GO:0048226">
    <property type="term" value="C:Casparian strip"/>
    <property type="evidence" value="ECO:0000315"/>
    <property type="project" value="UniProtKB"/>
</dbReference>
<dbReference type="GO" id="GO:0005179">
    <property type="term" value="F:hormone activity"/>
    <property type="evidence" value="ECO:0007669"/>
    <property type="project" value="UniProtKB-KW"/>
</dbReference>
<dbReference type="GO" id="GO:0160073">
    <property type="term" value="P:Casparian strip assembly"/>
    <property type="evidence" value="ECO:0000315"/>
    <property type="project" value="UniProtKB"/>
</dbReference>
<dbReference type="GO" id="GO:2000067">
    <property type="term" value="P:regulation of root morphogenesis"/>
    <property type="evidence" value="ECO:0000315"/>
    <property type="project" value="UniProtKB"/>
</dbReference>
<dbReference type="InterPro" id="IPR038974">
    <property type="entry name" value="CIF1/2"/>
</dbReference>
<dbReference type="PANTHER" id="PTHR35290:SF2">
    <property type="entry name" value="PROTEIN CASPARIAN STRIP INTEGRITY FACTOR 1"/>
    <property type="match status" value="1"/>
</dbReference>
<dbReference type="PANTHER" id="PTHR35290">
    <property type="entry name" value="PROTEIN CASPARIAN STRIP INTEGRITY FACTOR 1-RELATED"/>
    <property type="match status" value="1"/>
</dbReference>
<sequence length="83" mass="9512">MGMSPLTVKKLGFIFMIVSASALSVSFAGRPSIFVHKKINLREEMVERSMHEHERLLRMNTKDYGNNSPSPRLERPPFKLIPN</sequence>
<proteinExistence type="evidence at protein level"/>
<reference key="1">
    <citation type="journal article" date="1999" name="Nature">
        <title>Sequence and analysis of chromosome 2 of the plant Arabidopsis thaliana.</title>
        <authorList>
            <person name="Lin X."/>
            <person name="Kaul S."/>
            <person name="Rounsley S.D."/>
            <person name="Shea T.P."/>
            <person name="Benito M.-I."/>
            <person name="Town C.D."/>
            <person name="Fujii C.Y."/>
            <person name="Mason T.M."/>
            <person name="Bowman C.L."/>
            <person name="Barnstead M.E."/>
            <person name="Feldblyum T.V."/>
            <person name="Buell C.R."/>
            <person name="Ketchum K.A."/>
            <person name="Lee J.J."/>
            <person name="Ronning C.M."/>
            <person name="Koo H.L."/>
            <person name="Moffat K.S."/>
            <person name="Cronin L.A."/>
            <person name="Shen M."/>
            <person name="Pai G."/>
            <person name="Van Aken S."/>
            <person name="Umayam L."/>
            <person name="Tallon L.J."/>
            <person name="Gill J.E."/>
            <person name="Adams M.D."/>
            <person name="Carrera A.J."/>
            <person name="Creasy T.H."/>
            <person name="Goodman H.M."/>
            <person name="Somerville C.R."/>
            <person name="Copenhaver G.P."/>
            <person name="Preuss D."/>
            <person name="Nierman W.C."/>
            <person name="White O."/>
            <person name="Eisen J.A."/>
            <person name="Salzberg S.L."/>
            <person name="Fraser C.M."/>
            <person name="Venter J.C."/>
        </authorList>
    </citation>
    <scope>NUCLEOTIDE SEQUENCE [LARGE SCALE GENOMIC DNA]</scope>
    <source>
        <strain>cv. Columbia</strain>
    </source>
</reference>
<reference key="2">
    <citation type="journal article" date="2017" name="Plant J.">
        <title>Araport11: a complete reannotation of the Arabidopsis thaliana reference genome.</title>
        <authorList>
            <person name="Cheng C.Y."/>
            <person name="Krishnakumar V."/>
            <person name="Chan A.P."/>
            <person name="Thibaud-Nissen F."/>
            <person name="Schobel S."/>
            <person name="Town C.D."/>
        </authorList>
    </citation>
    <scope>GENOME REANNOTATION</scope>
    <source>
        <strain>cv. Columbia</strain>
    </source>
</reference>
<reference key="3">
    <citation type="journal article" date="2003" name="Science">
        <title>Empirical analysis of transcriptional activity in the Arabidopsis genome.</title>
        <authorList>
            <person name="Yamada K."/>
            <person name="Lim J."/>
            <person name="Dale J.M."/>
            <person name="Chen H."/>
            <person name="Shinn P."/>
            <person name="Palm C.J."/>
            <person name="Southwick A.M."/>
            <person name="Wu H.C."/>
            <person name="Kim C.J."/>
            <person name="Nguyen M."/>
            <person name="Pham P.K."/>
            <person name="Cheuk R.F."/>
            <person name="Karlin-Newmann G."/>
            <person name="Liu S.X."/>
            <person name="Lam B."/>
            <person name="Sakano H."/>
            <person name="Wu T."/>
            <person name="Yu G."/>
            <person name="Miranda M."/>
            <person name="Quach H.L."/>
            <person name="Tripp M."/>
            <person name="Chang C.H."/>
            <person name="Lee J.M."/>
            <person name="Toriumi M.J."/>
            <person name="Chan M.M."/>
            <person name="Tang C.C."/>
            <person name="Onodera C.S."/>
            <person name="Deng J.M."/>
            <person name="Akiyama K."/>
            <person name="Ansari Y."/>
            <person name="Arakawa T."/>
            <person name="Banh J."/>
            <person name="Banno F."/>
            <person name="Bowser L."/>
            <person name="Brooks S.Y."/>
            <person name="Carninci P."/>
            <person name="Chao Q."/>
            <person name="Choy N."/>
            <person name="Enju A."/>
            <person name="Goldsmith A.D."/>
            <person name="Gurjal M."/>
            <person name="Hansen N.F."/>
            <person name="Hayashizaki Y."/>
            <person name="Johnson-Hopson C."/>
            <person name="Hsuan V.W."/>
            <person name="Iida K."/>
            <person name="Karnes M."/>
            <person name="Khan S."/>
            <person name="Koesema E."/>
            <person name="Ishida J."/>
            <person name="Jiang P.X."/>
            <person name="Jones T."/>
            <person name="Kawai J."/>
            <person name="Kamiya A."/>
            <person name="Meyers C."/>
            <person name="Nakajima M."/>
            <person name="Narusaka M."/>
            <person name="Seki M."/>
            <person name="Sakurai T."/>
            <person name="Satou M."/>
            <person name="Tamse R."/>
            <person name="Vaysberg M."/>
            <person name="Wallender E.K."/>
            <person name="Wong C."/>
            <person name="Yamamura Y."/>
            <person name="Yuan S."/>
            <person name="Shinozaki K."/>
            <person name="Davis R.W."/>
            <person name="Theologis A."/>
            <person name="Ecker J.R."/>
        </authorList>
    </citation>
    <scope>NUCLEOTIDE SEQUENCE [LARGE SCALE MRNA]</scope>
    <source>
        <strain>cv. Columbia</strain>
    </source>
</reference>
<reference key="4">
    <citation type="submission" date="2005-03" db="EMBL/GenBank/DDBJ databases">
        <title>Large-scale analysis of RIKEN Arabidopsis full-length (RAFL) cDNAs.</title>
        <authorList>
            <person name="Totoki Y."/>
            <person name="Seki M."/>
            <person name="Ishida J."/>
            <person name="Nakajima M."/>
            <person name="Enju A."/>
            <person name="Kamiya A."/>
            <person name="Narusaka M."/>
            <person name="Shin-i T."/>
            <person name="Nakagawa M."/>
            <person name="Sakamoto N."/>
            <person name="Oishi K."/>
            <person name="Kohara Y."/>
            <person name="Kobayashi M."/>
            <person name="Toyoda A."/>
            <person name="Sakaki Y."/>
            <person name="Sakurai T."/>
            <person name="Iida K."/>
            <person name="Akiyama K."/>
            <person name="Satou M."/>
            <person name="Toyoda T."/>
            <person name="Konagaya A."/>
            <person name="Carninci P."/>
            <person name="Kawai J."/>
            <person name="Hayashizaki Y."/>
            <person name="Shinozaki K."/>
        </authorList>
    </citation>
    <scope>NUCLEOTIDE SEQUENCE [LARGE SCALE MRNA]</scope>
    <source>
        <strain>cv. Columbia</strain>
    </source>
</reference>
<reference key="5">
    <citation type="journal article" date="2017" name="Science">
        <title>A peptide hormone required for Casparian strip diffusion barrier formation in Arabidopsis roots.</title>
        <authorList>
            <person name="Nakayama T."/>
            <person name="Shinohara H."/>
            <person name="Tanaka M."/>
            <person name="Baba K."/>
            <person name="Ogawa-Ohnishi M."/>
            <person name="Matsubayashi Y."/>
        </authorList>
    </citation>
    <scope>FUNCTION</scope>
    <scope>DISRUPTION PHENOTYPE</scope>
    <scope>TISSUE SPECIFICITY</scope>
    <scope>DEVELOPMENTAL STAGE</scope>
    <scope>SULFATION AT TYR-64</scope>
    <scope>HYDROXYLATION AT PRO-69 AND PRO-71</scope>
    <scope>INTERACTION WITH GSO1 AND GSO2</scope>
    <scope>INDUCTION BY IRON</scope>
</reference>
<accession>Q84MD2</accession>